<feature type="chain" id="PRO_0000108853" description="Phospho-N-acetylmuramoyl-pentapeptide-transferase">
    <location>
        <begin position="1"/>
        <end position="359"/>
    </location>
</feature>
<feature type="transmembrane region" description="Helical" evidence="1">
    <location>
        <begin position="3"/>
        <end position="23"/>
    </location>
</feature>
<feature type="transmembrane region" description="Helical" evidence="1">
    <location>
        <begin position="55"/>
        <end position="75"/>
    </location>
</feature>
<feature type="transmembrane region" description="Helical" evidence="1">
    <location>
        <begin position="80"/>
        <end position="100"/>
    </location>
</feature>
<feature type="transmembrane region" description="Helical" evidence="1">
    <location>
        <begin position="117"/>
        <end position="137"/>
    </location>
</feature>
<feature type="transmembrane region" description="Helical" evidence="1">
    <location>
        <begin position="156"/>
        <end position="176"/>
    </location>
</feature>
<feature type="transmembrane region" description="Helical" evidence="1">
    <location>
        <begin position="187"/>
        <end position="207"/>
    </location>
</feature>
<feature type="transmembrane region" description="Helical" evidence="1">
    <location>
        <begin position="231"/>
        <end position="251"/>
    </location>
</feature>
<feature type="transmembrane region" description="Helical" evidence="1">
    <location>
        <begin position="255"/>
        <end position="275"/>
    </location>
</feature>
<feature type="transmembrane region" description="Helical" evidence="1">
    <location>
        <begin position="280"/>
        <end position="300"/>
    </location>
</feature>
<feature type="transmembrane region" description="Helical" evidence="1">
    <location>
        <begin position="334"/>
        <end position="354"/>
    </location>
</feature>
<accession>P64260</accession>
<accession>A0A1R3Y0A5</accession>
<accession>O06221</accession>
<accession>X2BJW5</accession>
<evidence type="ECO:0000255" key="1">
    <source>
        <dbReference type="HAMAP-Rule" id="MF_00038"/>
    </source>
</evidence>
<organism>
    <name type="scientific">Mycobacterium bovis (strain ATCC BAA-935 / AF2122/97)</name>
    <dbReference type="NCBI Taxonomy" id="233413"/>
    <lineage>
        <taxon>Bacteria</taxon>
        <taxon>Bacillati</taxon>
        <taxon>Actinomycetota</taxon>
        <taxon>Actinomycetes</taxon>
        <taxon>Mycobacteriales</taxon>
        <taxon>Mycobacteriaceae</taxon>
        <taxon>Mycobacterium</taxon>
        <taxon>Mycobacterium tuberculosis complex</taxon>
    </lineage>
</organism>
<gene>
    <name evidence="1" type="primary">mraY</name>
    <name type="synonym">murX</name>
    <name type="ordered locus">BQ2027_MB2180C</name>
</gene>
<keyword id="KW-0131">Cell cycle</keyword>
<keyword id="KW-0132">Cell division</keyword>
<keyword id="KW-1003">Cell membrane</keyword>
<keyword id="KW-0133">Cell shape</keyword>
<keyword id="KW-0961">Cell wall biogenesis/degradation</keyword>
<keyword id="KW-0460">Magnesium</keyword>
<keyword id="KW-0472">Membrane</keyword>
<keyword id="KW-0479">Metal-binding</keyword>
<keyword id="KW-0573">Peptidoglycan synthesis</keyword>
<keyword id="KW-1185">Reference proteome</keyword>
<keyword id="KW-0808">Transferase</keyword>
<keyword id="KW-0812">Transmembrane</keyword>
<keyword id="KW-1133">Transmembrane helix</keyword>
<reference key="1">
    <citation type="journal article" date="2003" name="Proc. Natl. Acad. Sci. U.S.A.">
        <title>The complete genome sequence of Mycobacterium bovis.</title>
        <authorList>
            <person name="Garnier T."/>
            <person name="Eiglmeier K."/>
            <person name="Camus J.-C."/>
            <person name="Medina N."/>
            <person name="Mansoor H."/>
            <person name="Pryor M."/>
            <person name="Duthoy S."/>
            <person name="Grondin S."/>
            <person name="Lacroix C."/>
            <person name="Monsempe C."/>
            <person name="Simon S."/>
            <person name="Harris B."/>
            <person name="Atkin R."/>
            <person name="Doggett J."/>
            <person name="Mayes R."/>
            <person name="Keating L."/>
            <person name="Wheeler P.R."/>
            <person name="Parkhill J."/>
            <person name="Barrell B.G."/>
            <person name="Cole S.T."/>
            <person name="Gordon S.V."/>
            <person name="Hewinson R.G."/>
        </authorList>
    </citation>
    <scope>NUCLEOTIDE SEQUENCE [LARGE SCALE GENOMIC DNA]</scope>
    <source>
        <strain>ATCC BAA-935 / AF2122/97</strain>
    </source>
</reference>
<reference key="2">
    <citation type="journal article" date="2017" name="Genome Announc.">
        <title>Updated reference genome sequence and annotation of Mycobacterium bovis AF2122/97.</title>
        <authorList>
            <person name="Malone K.M."/>
            <person name="Farrell D."/>
            <person name="Stuber T.P."/>
            <person name="Schubert O.T."/>
            <person name="Aebersold R."/>
            <person name="Robbe-Austerman S."/>
            <person name="Gordon S.V."/>
        </authorList>
    </citation>
    <scope>NUCLEOTIDE SEQUENCE [LARGE SCALE GENOMIC DNA]</scope>
    <scope>GENOME REANNOTATION</scope>
    <source>
        <strain>ATCC BAA-935 / AF2122/97</strain>
    </source>
</reference>
<sequence>MRQILIAVAVAVTVSILLTPVLIRLFTKQGFGHQIREDGPPSHHTKRGTPSMGGVAILAGIWAGYLGAHLAGLAFDGEGIGASGLLVLGLATALGGVGFIDDLIKIRRSRNLGLNKTAKTVGQITSAVLFGVLVLQFRNAAGLTPGSADLSYVREIATVTLAPVLFVLFCVVIVSAWSNAVNFTDGLDGLAAGTMAMVTAAYVLITFWQYRNACVTAPGLGCYNVRDPLDLALIAAATAGACIGFLWWNAAPAKIFMGDTGSLALGGVIAGLSVTSRTEILAVVLGALFVAEITSVVLQILTFRTTGRRMFRMAPFHHHFELVGWAETTVIIRFWLLTAITCGLGVALFYGEWLAAVGA</sequence>
<comment type="function">
    <text evidence="1">Catalyzes the initial step of the lipid cycle reactions in the biosynthesis of the cell wall peptidoglycan: transfers peptidoglycan precursor phospho-MurNAc-pentapeptide from UDP-MurNAc-pentapeptide onto the lipid carrier undecaprenyl phosphate, yielding undecaprenyl-pyrophosphoryl-MurNAc-pentapeptide, known as lipid I.</text>
</comment>
<comment type="catalytic activity">
    <reaction evidence="1">
        <text>UDP-N-acetyl-alpha-D-muramoyl-L-alanyl-gamma-D-glutamyl-meso-2,6-diaminopimeloyl-D-alanyl-D-alanine + di-trans,octa-cis-undecaprenyl phosphate = di-trans,octa-cis-undecaprenyl diphospho-N-acetyl-alpha-D-muramoyl-L-alanyl-D-glutamyl-meso-2,6-diaminopimeloyl-D-alanyl-D-alanine + UMP</text>
        <dbReference type="Rhea" id="RHEA:28386"/>
        <dbReference type="ChEBI" id="CHEBI:57865"/>
        <dbReference type="ChEBI" id="CHEBI:60392"/>
        <dbReference type="ChEBI" id="CHEBI:61386"/>
        <dbReference type="ChEBI" id="CHEBI:61387"/>
        <dbReference type="EC" id="2.7.8.13"/>
    </reaction>
</comment>
<comment type="cofactor">
    <cofactor evidence="1">
        <name>Mg(2+)</name>
        <dbReference type="ChEBI" id="CHEBI:18420"/>
    </cofactor>
</comment>
<comment type="pathway">
    <text evidence="1">Cell wall biogenesis; peptidoglycan biosynthesis.</text>
</comment>
<comment type="subcellular location">
    <subcellularLocation>
        <location evidence="1">Cell membrane</location>
        <topology evidence="1">Multi-pass membrane protein</topology>
    </subcellularLocation>
</comment>
<comment type="similarity">
    <text evidence="1">Belongs to the glycosyltransferase 4 family. MraY subfamily.</text>
</comment>
<name>MRAY_MYCBO</name>
<proteinExistence type="inferred from homology"/>
<dbReference type="EC" id="2.7.8.13" evidence="1"/>
<dbReference type="EMBL" id="LT708304">
    <property type="protein sequence ID" value="SIU00788.1"/>
    <property type="molecule type" value="Genomic_DNA"/>
</dbReference>
<dbReference type="RefSeq" id="NP_855829.1">
    <property type="nucleotide sequence ID" value="NC_002945.3"/>
</dbReference>
<dbReference type="RefSeq" id="WP_003411171.1">
    <property type="nucleotide sequence ID" value="NC_002945.4"/>
</dbReference>
<dbReference type="SMR" id="P64260"/>
<dbReference type="KEGG" id="mbo:BQ2027_MB2180C"/>
<dbReference type="PATRIC" id="fig|233413.5.peg.2396"/>
<dbReference type="UniPathway" id="UPA00219"/>
<dbReference type="Proteomes" id="UP000001419">
    <property type="component" value="Chromosome"/>
</dbReference>
<dbReference type="GO" id="GO:0005886">
    <property type="term" value="C:plasma membrane"/>
    <property type="evidence" value="ECO:0007669"/>
    <property type="project" value="UniProtKB-SubCell"/>
</dbReference>
<dbReference type="GO" id="GO:0046872">
    <property type="term" value="F:metal ion binding"/>
    <property type="evidence" value="ECO:0007669"/>
    <property type="project" value="UniProtKB-KW"/>
</dbReference>
<dbReference type="GO" id="GO:0008963">
    <property type="term" value="F:phospho-N-acetylmuramoyl-pentapeptide-transferase activity"/>
    <property type="evidence" value="ECO:0007669"/>
    <property type="project" value="UniProtKB-UniRule"/>
</dbReference>
<dbReference type="GO" id="GO:0051992">
    <property type="term" value="F:UDP-N-acetylmuramoyl-L-alanyl-D-glutamyl-meso-2,6-diaminopimelyl-D-alanyl-D-alanine:undecaprenyl-phosphate transferase activity"/>
    <property type="evidence" value="ECO:0007669"/>
    <property type="project" value="RHEA"/>
</dbReference>
<dbReference type="GO" id="GO:0051301">
    <property type="term" value="P:cell division"/>
    <property type="evidence" value="ECO:0007669"/>
    <property type="project" value="UniProtKB-KW"/>
</dbReference>
<dbReference type="GO" id="GO:0071555">
    <property type="term" value="P:cell wall organization"/>
    <property type="evidence" value="ECO:0007669"/>
    <property type="project" value="UniProtKB-KW"/>
</dbReference>
<dbReference type="GO" id="GO:0009252">
    <property type="term" value="P:peptidoglycan biosynthetic process"/>
    <property type="evidence" value="ECO:0007669"/>
    <property type="project" value="UniProtKB-UniRule"/>
</dbReference>
<dbReference type="GO" id="GO:0008360">
    <property type="term" value="P:regulation of cell shape"/>
    <property type="evidence" value="ECO:0007669"/>
    <property type="project" value="UniProtKB-KW"/>
</dbReference>
<dbReference type="CDD" id="cd06852">
    <property type="entry name" value="GT_MraY"/>
    <property type="match status" value="1"/>
</dbReference>
<dbReference type="HAMAP" id="MF_00038">
    <property type="entry name" value="MraY"/>
    <property type="match status" value="1"/>
</dbReference>
<dbReference type="InterPro" id="IPR000715">
    <property type="entry name" value="Glycosyl_transferase_4"/>
</dbReference>
<dbReference type="InterPro" id="IPR003524">
    <property type="entry name" value="PNAcMuramoyl-5peptid_Trfase"/>
</dbReference>
<dbReference type="InterPro" id="IPR018480">
    <property type="entry name" value="PNAcMuramoyl-5peptid_Trfase_CS"/>
</dbReference>
<dbReference type="NCBIfam" id="TIGR00445">
    <property type="entry name" value="mraY"/>
    <property type="match status" value="1"/>
</dbReference>
<dbReference type="PANTHER" id="PTHR22926">
    <property type="entry name" value="PHOSPHO-N-ACETYLMURAMOYL-PENTAPEPTIDE-TRANSFERASE"/>
    <property type="match status" value="1"/>
</dbReference>
<dbReference type="PANTHER" id="PTHR22926:SF5">
    <property type="entry name" value="PHOSPHO-N-ACETYLMURAMOYL-PENTAPEPTIDE-TRANSFERASE HOMOLOG"/>
    <property type="match status" value="1"/>
</dbReference>
<dbReference type="Pfam" id="PF00953">
    <property type="entry name" value="Glycos_transf_4"/>
    <property type="match status" value="1"/>
</dbReference>
<dbReference type="Pfam" id="PF10555">
    <property type="entry name" value="MraY_sig1"/>
    <property type="match status" value="1"/>
</dbReference>
<dbReference type="PROSITE" id="PS01347">
    <property type="entry name" value="MRAY_1"/>
    <property type="match status" value="1"/>
</dbReference>
<dbReference type="PROSITE" id="PS01348">
    <property type="entry name" value="MRAY_2"/>
    <property type="match status" value="1"/>
</dbReference>
<protein>
    <recommendedName>
        <fullName evidence="1">Phospho-N-acetylmuramoyl-pentapeptide-transferase</fullName>
        <ecNumber evidence="1">2.7.8.13</ecNumber>
    </recommendedName>
    <alternativeName>
        <fullName evidence="1">UDP-MurNAc-pentapeptide phosphotransferase</fullName>
    </alternativeName>
</protein>